<dbReference type="EMBL" id="AJ276003">
    <property type="protein sequence ID" value="CAB76563.1"/>
    <property type="molecule type" value="mRNA"/>
</dbReference>
<dbReference type="EMBL" id="AY780787">
    <property type="protein sequence ID" value="AAV98357.1"/>
    <property type="molecule type" value="mRNA"/>
</dbReference>
<dbReference type="EMBL" id="BC003413">
    <property type="protein sequence ID" value="AAH03413.1"/>
    <property type="molecule type" value="mRNA"/>
</dbReference>
<dbReference type="CCDS" id="CCDS34050.1">
    <molecule id="Q9NY12-1"/>
</dbReference>
<dbReference type="RefSeq" id="NP_061856.1">
    <molecule id="Q9NY12-1"/>
    <property type="nucleotide sequence ID" value="NM_018983.4"/>
</dbReference>
<dbReference type="RefSeq" id="NP_127460.1">
    <molecule id="Q9NY12-1"/>
    <property type="nucleotide sequence ID" value="NM_032993.2"/>
</dbReference>
<dbReference type="RefSeq" id="XP_047271745.1">
    <molecule id="Q9NY12-1"/>
    <property type="nucleotide sequence ID" value="XM_047415789.1"/>
</dbReference>
<dbReference type="RefSeq" id="XP_054206173.1">
    <molecule id="Q9NY12-1"/>
    <property type="nucleotide sequence ID" value="XM_054350198.1"/>
</dbReference>
<dbReference type="PDB" id="7BGB">
    <property type="method" value="EM"/>
    <property type="resolution" value="3.39 A"/>
    <property type="chains" value="D/H=1-217"/>
</dbReference>
<dbReference type="PDB" id="7TRC">
    <property type="method" value="EM"/>
    <property type="resolution" value="3.30 A"/>
    <property type="chains" value="D/H=1-217"/>
</dbReference>
<dbReference type="PDB" id="7V9A">
    <property type="method" value="EM"/>
    <property type="resolution" value="3.94 A"/>
    <property type="chains" value="D/H=1-217"/>
</dbReference>
<dbReference type="PDB" id="8OUE">
    <property type="method" value="EM"/>
    <property type="resolution" value="2.70 A"/>
    <property type="chains" value="D/H=1-217"/>
</dbReference>
<dbReference type="PDB" id="8OUF">
    <property type="method" value="EM"/>
    <property type="resolution" value="3.10 A"/>
    <property type="chains" value="D/H=1-217"/>
</dbReference>
<dbReference type="PDBsum" id="7BGB"/>
<dbReference type="PDBsum" id="7TRC"/>
<dbReference type="PDBsum" id="7V9A"/>
<dbReference type="PDBsum" id="8OUE"/>
<dbReference type="PDBsum" id="8OUF"/>
<dbReference type="EMDB" id="EMD-12177"/>
<dbReference type="EMDB" id="EMD-17190"/>
<dbReference type="EMDB" id="EMD-17191"/>
<dbReference type="EMDB" id="EMD-26085"/>
<dbReference type="EMDB" id="EMD-31813"/>
<dbReference type="EMDB" id="EMD-31814"/>
<dbReference type="SMR" id="Q9NY12"/>
<dbReference type="BioGRID" id="119949">
    <property type="interactions" value="233"/>
</dbReference>
<dbReference type="ComplexPortal" id="CPX-265">
    <property type="entry name" value="Telomerase holoenzyme complex"/>
</dbReference>
<dbReference type="CORUM" id="Q9NY12"/>
<dbReference type="FunCoup" id="Q9NY12">
    <property type="interactions" value="1980"/>
</dbReference>
<dbReference type="IntAct" id="Q9NY12">
    <property type="interactions" value="128"/>
</dbReference>
<dbReference type="MINT" id="Q9NY12"/>
<dbReference type="STRING" id="9606.ENSP00000226796"/>
<dbReference type="GlyGen" id="Q9NY12">
    <property type="glycosylation" value="1 site, 1 O-linked glycan (1 site)"/>
</dbReference>
<dbReference type="iPTMnet" id="Q9NY12"/>
<dbReference type="PhosphoSitePlus" id="Q9NY12"/>
<dbReference type="SwissPalm" id="Q9NY12"/>
<dbReference type="BioMuta" id="GAR1"/>
<dbReference type="DMDM" id="51828015"/>
<dbReference type="jPOST" id="Q9NY12"/>
<dbReference type="MassIVE" id="Q9NY12"/>
<dbReference type="PaxDb" id="9606-ENSP00000226796"/>
<dbReference type="PeptideAtlas" id="Q9NY12"/>
<dbReference type="ProteomicsDB" id="83147">
    <molecule id="Q9NY12-1"/>
</dbReference>
<dbReference type="ProteomicsDB" id="83148">
    <molecule id="Q9NY12-2"/>
</dbReference>
<dbReference type="Pumba" id="Q9NY12"/>
<dbReference type="Antibodypedia" id="26373">
    <property type="antibodies" value="131 antibodies from 25 providers"/>
</dbReference>
<dbReference type="DNASU" id="54433"/>
<dbReference type="Ensembl" id="ENST00000226796.7">
    <molecule id="Q9NY12-1"/>
    <property type="protein sequence ID" value="ENSP00000226796.6"/>
    <property type="gene ID" value="ENSG00000109534.17"/>
</dbReference>
<dbReference type="Ensembl" id="ENST00000394631.7">
    <molecule id="Q9NY12-1"/>
    <property type="protein sequence ID" value="ENSP00000378127.3"/>
    <property type="gene ID" value="ENSG00000109534.17"/>
</dbReference>
<dbReference type="GeneID" id="54433"/>
<dbReference type="KEGG" id="hsa:54433"/>
<dbReference type="MANE-Select" id="ENST00000226796.7">
    <property type="protein sequence ID" value="ENSP00000226796.6"/>
    <property type="RefSeq nucleotide sequence ID" value="NM_018983.4"/>
    <property type="RefSeq protein sequence ID" value="NP_061856.1"/>
</dbReference>
<dbReference type="UCSC" id="uc003hzt.4">
    <molecule id="Q9NY12-1"/>
    <property type="organism name" value="human"/>
</dbReference>
<dbReference type="AGR" id="HGNC:14264"/>
<dbReference type="CTD" id="54433"/>
<dbReference type="DisGeNET" id="54433"/>
<dbReference type="GeneCards" id="GAR1"/>
<dbReference type="HGNC" id="HGNC:14264">
    <property type="gene designation" value="GAR1"/>
</dbReference>
<dbReference type="HPA" id="ENSG00000109534">
    <property type="expression patterns" value="Low tissue specificity"/>
</dbReference>
<dbReference type="MIM" id="606468">
    <property type="type" value="gene"/>
</dbReference>
<dbReference type="neXtProt" id="NX_Q9NY12"/>
<dbReference type="OpenTargets" id="ENSG00000109534"/>
<dbReference type="PharmGKB" id="PA164720194"/>
<dbReference type="VEuPathDB" id="HostDB:ENSG00000109534"/>
<dbReference type="eggNOG" id="KOG3262">
    <property type="taxonomic scope" value="Eukaryota"/>
</dbReference>
<dbReference type="GeneTree" id="ENSGT00730000111223"/>
<dbReference type="HOGENOM" id="CLU_080002_0_1_1"/>
<dbReference type="InParanoid" id="Q9NY12"/>
<dbReference type="OMA" id="KPQDGIV"/>
<dbReference type="OrthoDB" id="2187159at2759"/>
<dbReference type="PAN-GO" id="Q9NY12">
    <property type="GO annotations" value="3 GO annotations based on evolutionary models"/>
</dbReference>
<dbReference type="PhylomeDB" id="Q9NY12"/>
<dbReference type="TreeFam" id="TF350747"/>
<dbReference type="PathwayCommons" id="Q9NY12"/>
<dbReference type="Reactome" id="R-HSA-171319">
    <property type="pathway name" value="Telomere Extension By Telomerase"/>
</dbReference>
<dbReference type="Reactome" id="R-HSA-6790901">
    <property type="pathway name" value="rRNA modification in the nucleus and cytosol"/>
</dbReference>
<dbReference type="SignaLink" id="Q9NY12"/>
<dbReference type="SIGNOR" id="Q9NY12"/>
<dbReference type="BioGRID-ORCS" id="54433">
    <property type="hits" value="460 hits in 1162 CRISPR screens"/>
</dbReference>
<dbReference type="CD-CODE" id="91857CE7">
    <property type="entry name" value="Nucleolus"/>
</dbReference>
<dbReference type="ChiTaRS" id="GAR1">
    <property type="organism name" value="human"/>
</dbReference>
<dbReference type="GeneWiki" id="Nucleolar_protein,_member_A1"/>
<dbReference type="GenomeRNAi" id="54433"/>
<dbReference type="Pharos" id="Q9NY12">
    <property type="development level" value="Tbio"/>
</dbReference>
<dbReference type="PRO" id="PR:Q9NY12"/>
<dbReference type="Proteomes" id="UP000005640">
    <property type="component" value="Chromosome 4"/>
</dbReference>
<dbReference type="RNAct" id="Q9NY12">
    <property type="molecule type" value="protein"/>
</dbReference>
<dbReference type="Bgee" id="ENSG00000109534">
    <property type="expression patterns" value="Expressed in tendon of biceps brachii and 214 other cell types or tissues"/>
</dbReference>
<dbReference type="GO" id="GO:0072589">
    <property type="term" value="C:box H/ACA scaRNP complex"/>
    <property type="evidence" value="ECO:0000304"/>
    <property type="project" value="BHF-UCL"/>
</dbReference>
<dbReference type="GO" id="GO:0031429">
    <property type="term" value="C:box H/ACA snoRNP complex"/>
    <property type="evidence" value="ECO:0000314"/>
    <property type="project" value="BHF-UCL"/>
</dbReference>
<dbReference type="GO" id="GO:0090661">
    <property type="term" value="C:box H/ACA telomerase RNP complex"/>
    <property type="evidence" value="ECO:0000314"/>
    <property type="project" value="BHF-UCL"/>
</dbReference>
<dbReference type="GO" id="GO:0000781">
    <property type="term" value="C:chromosome, telomeric region"/>
    <property type="evidence" value="ECO:0007005"/>
    <property type="project" value="BHF-UCL"/>
</dbReference>
<dbReference type="GO" id="GO:0001650">
    <property type="term" value="C:fibrillar center"/>
    <property type="evidence" value="ECO:0000314"/>
    <property type="project" value="HPA"/>
</dbReference>
<dbReference type="GO" id="GO:0005654">
    <property type="term" value="C:nucleoplasm"/>
    <property type="evidence" value="ECO:0000314"/>
    <property type="project" value="HPA"/>
</dbReference>
<dbReference type="GO" id="GO:0005697">
    <property type="term" value="C:telomerase holoenzyme complex"/>
    <property type="evidence" value="ECO:0000314"/>
    <property type="project" value="UniProtKB"/>
</dbReference>
<dbReference type="GO" id="GO:0034513">
    <property type="term" value="F:box H/ACA snoRNA binding"/>
    <property type="evidence" value="ECO:0000353"/>
    <property type="project" value="BHF-UCL"/>
</dbReference>
<dbReference type="GO" id="GO:0003723">
    <property type="term" value="F:RNA binding"/>
    <property type="evidence" value="ECO:0000353"/>
    <property type="project" value="BHF-UCL"/>
</dbReference>
<dbReference type="GO" id="GO:0070034">
    <property type="term" value="F:telomerase RNA binding"/>
    <property type="evidence" value="ECO:0000353"/>
    <property type="project" value="BHF-UCL"/>
</dbReference>
<dbReference type="GO" id="GO:0000454">
    <property type="term" value="P:snoRNA guided rRNA pseudouridine synthesis"/>
    <property type="evidence" value="ECO:0000318"/>
    <property type="project" value="GO_Central"/>
</dbReference>
<dbReference type="GO" id="GO:0007004">
    <property type="term" value="P:telomere maintenance via telomerase"/>
    <property type="evidence" value="ECO:0000314"/>
    <property type="project" value="UniProtKB"/>
</dbReference>
<dbReference type="FunFam" id="2.40.10.230:FF:000001">
    <property type="entry name" value="H/ACA ribonucleoprotein complex subunit"/>
    <property type="match status" value="1"/>
</dbReference>
<dbReference type="Gene3D" id="2.40.10.230">
    <property type="entry name" value="Probable tRNA pseudouridine synthase domain"/>
    <property type="match status" value="1"/>
</dbReference>
<dbReference type="InterPro" id="IPR038664">
    <property type="entry name" value="Gar1/Naf1_Cbf5-bd_sf"/>
</dbReference>
<dbReference type="InterPro" id="IPR007504">
    <property type="entry name" value="H/ACA_rnp_Gar1/Naf1"/>
</dbReference>
<dbReference type="InterPro" id="IPR009000">
    <property type="entry name" value="Transl_B-barrel_sf"/>
</dbReference>
<dbReference type="PANTHER" id="PTHR23237:SF6">
    <property type="entry name" value="H_ACA RIBONUCLEOPROTEIN COMPLEX SUBUNIT 1"/>
    <property type="match status" value="1"/>
</dbReference>
<dbReference type="PANTHER" id="PTHR23237">
    <property type="entry name" value="NUCLEOLAR PROTEIN FAMILY A MEMBER 1 SNORNP PROTEIN GAR1"/>
    <property type="match status" value="1"/>
</dbReference>
<dbReference type="Pfam" id="PF04410">
    <property type="entry name" value="Gar1"/>
    <property type="match status" value="1"/>
</dbReference>
<dbReference type="SUPFAM" id="SSF50447">
    <property type="entry name" value="Translation proteins"/>
    <property type="match status" value="1"/>
</dbReference>
<gene>
    <name type="primary">GAR1</name>
    <name type="synonym">NOLA1</name>
</gene>
<organism>
    <name type="scientific">Homo sapiens</name>
    <name type="common">Human</name>
    <dbReference type="NCBI Taxonomy" id="9606"/>
    <lineage>
        <taxon>Eukaryota</taxon>
        <taxon>Metazoa</taxon>
        <taxon>Chordata</taxon>
        <taxon>Craniata</taxon>
        <taxon>Vertebrata</taxon>
        <taxon>Euteleostomi</taxon>
        <taxon>Mammalia</taxon>
        <taxon>Eutheria</taxon>
        <taxon>Euarchontoglires</taxon>
        <taxon>Primates</taxon>
        <taxon>Haplorrhini</taxon>
        <taxon>Catarrhini</taxon>
        <taxon>Hominidae</taxon>
        <taxon>Homo</taxon>
    </lineage>
</organism>
<evidence type="ECO:0000256" key="1">
    <source>
        <dbReference type="SAM" id="MobiDB-lite"/>
    </source>
</evidence>
<evidence type="ECO:0000269" key="2">
    <source>
    </source>
</evidence>
<evidence type="ECO:0000269" key="3">
    <source>
    </source>
</evidence>
<evidence type="ECO:0000269" key="4">
    <source>
    </source>
</evidence>
<evidence type="ECO:0000269" key="5">
    <source>
    </source>
</evidence>
<evidence type="ECO:0000269" key="6">
    <source>
    </source>
</evidence>
<evidence type="ECO:0000269" key="7">
    <source>
    </source>
</evidence>
<evidence type="ECO:0000269" key="8">
    <source>
    </source>
</evidence>
<evidence type="ECO:0000303" key="9">
    <source ref="2"/>
</evidence>
<evidence type="ECO:0000305" key="10"/>
<evidence type="ECO:0007744" key="11">
    <source>
    </source>
</evidence>
<evidence type="ECO:0007829" key="12">
    <source>
        <dbReference type="PDB" id="7TRC"/>
    </source>
</evidence>
<comment type="function">
    <text evidence="2 5">Required for ribosome biogenesis and telomere maintenance. Part of the H/ACA small nucleolar ribonucleoprotein (H/ACA snoRNP) complex, which catalyzes pseudouridylation of rRNA. This involves the isomerization of uridine such that the ribose is subsequently attached to C5, instead of the normal N1. Each rRNA can contain up to 100 pseudouridine ('psi') residues, which may serve to stabilize the conformation of rRNAs. May also be required for correct processing or intranuclear trafficking of TERC, the RNA component of the telomerase reverse transcriptase (TERT) holoenzyme.</text>
</comment>
<comment type="subunit">
    <text evidence="3 4 6 7 8">Part of the H/ACA small nucleolar ribonucleoprotein (H/ACA snoRNP) complex, which contains NHP2/NOLA2, GAR1/NOLA1, NOP10/NOLA3, and DKC1/NOLA4, which is presumed to be the catalytic subunit (PubMed:11509230, PubMed:12244096). The complex contains a stable core formed by binding of one or two NOP10-DKC1 heterodimers to NHP2; GAR1 subsequently binds to this core via DKC1 (PubMed:11509230, PubMed:12244096). The complex binds a box H/ACA small nucleolar RNA (snoRNA), which may target the specific site of modification within the RNA substrate (PubMed:11509230, PubMed:12244096). The complex also interacts with TERC, which contains a 3'-terminal domain related to the box H/ACA snoRNAs (PubMed:11509230, PubMed:12244096). Specific interactions with snoRNAs or TERC are mediated by GAR1 and NHP2 (PubMed:11509230, PubMed:12244096). Associates with NOLC1/NOPP140 (PubMed:11509230, PubMed:12244096). H/ACA snoRNPs interact with the SMN complex, consisting of SMN1 or SMN2, GEMIN2/SIP1, DDX20/GEMIN3, and GEMIN4 (PubMed:11509230, PubMed:12244096). This is mediated by interaction between GAR1 and SMN1 or SMN2 (PubMed:11509230, PubMed:12244096). The SMN complex may be required for correct assembly of the H/ACA snoRNP complex (PubMed:11509230, PubMed:12244096). Component of the telomerase holoenzyme complex composed of one molecule of TERT, one molecule of WRAP53/TCAB1, two molecules of H/ACA ribonucleoprotein complex subunits DKC1, NOP10, NHP2 and GAR1, and a telomerase RNA template component (TERC) (PubMed:19179534, PubMed:20351177, PubMed:29695869). The telomerase holoenzyme complex is associated with TEP1, SMG6/EST1A and POT1 (PubMed:19179534).</text>
</comment>
<comment type="subcellular location">
    <subcellularLocation>
        <location>Nucleus</location>
        <location>Nucleolus</location>
    </subcellularLocation>
    <subcellularLocation>
        <location>Nucleus</location>
        <location>Cajal body</location>
    </subcellularLocation>
    <text>Also localized to Cajal bodies (coiled bodies).</text>
</comment>
<comment type="alternative products">
    <event type="alternative splicing"/>
    <isoform>
        <id>Q9NY12-1</id>
        <name>1</name>
        <sequence type="displayed"/>
    </isoform>
    <isoform>
        <id>Q9NY12-2</id>
        <name>2</name>
        <sequence type="described" ref="VSP_014594"/>
    </isoform>
</comment>
<comment type="domain">
    <text>Interaction with SMN1 requires at least one of the RGG-box regions.</text>
</comment>
<comment type="similarity">
    <text evidence="10">Belongs to the GAR1 family.</text>
</comment>
<proteinExistence type="evidence at protein level"/>
<reference key="1">
    <citation type="journal article" date="2000" name="Mol. Cell. Biol.">
        <title>In vitro assembly of human H/ACA small nucleolar RNPs reveals unique features of U17 and telomerase RNAs.</title>
        <authorList>
            <person name="Dragon F."/>
            <person name="Pogacic V."/>
            <person name="Filipowicz W."/>
        </authorList>
    </citation>
    <scope>NUCLEOTIDE SEQUENCE [MRNA] (ISOFORM 1)</scope>
    <scope>FUNCTION</scope>
    <scope>SUBCELLULAR LOCATION</scope>
</reference>
<reference key="2">
    <citation type="submission" date="2004-10" db="EMBL/GenBank/DDBJ databases">
        <authorList>
            <person name="Li H."/>
            <person name="Nong W."/>
            <person name="Ke R."/>
            <person name="Zhong G."/>
            <person name="Xiao W."/>
            <person name="Shen C."/>
            <person name="Zhou G."/>
            <person name="Lin L."/>
            <person name="Yang S."/>
        </authorList>
    </citation>
    <scope>NUCLEOTIDE SEQUENCE [LARGE SCALE MRNA] (ISOFORM 2)</scope>
</reference>
<reference key="3">
    <citation type="journal article" date="2004" name="Genome Res.">
        <title>The status, quality, and expansion of the NIH full-length cDNA project: the Mammalian Gene Collection (MGC).</title>
        <authorList>
            <consortium name="The MGC Project Team"/>
        </authorList>
    </citation>
    <scope>NUCLEOTIDE SEQUENCE [LARGE SCALE MRNA] (ISOFORM 1)</scope>
    <source>
        <tissue>Placenta</tissue>
    </source>
</reference>
<reference key="4">
    <citation type="journal article" date="2001" name="Curr. Biol.">
        <title>The survival of motor neurons (SMN) protein interacts with the snoRNP proteins fibrillarin and GAR1.</title>
        <authorList>
            <person name="Pellizzoni L."/>
            <person name="Baccon J."/>
            <person name="Charroux B."/>
            <person name="Dreyfuss G."/>
        </authorList>
    </citation>
    <scope>INTERACTION WITH THE SMN COMPLEX</scope>
    <scope>SUBCELLULAR LOCATION</scope>
</reference>
<reference key="5">
    <citation type="journal article" date="2002" name="Curr. Biol.">
        <title>Directed proteomic analysis of the human nucleolus.</title>
        <authorList>
            <person name="Andersen J.S."/>
            <person name="Lyon C.E."/>
            <person name="Fox A.H."/>
            <person name="Leung A.K.L."/>
            <person name="Lam Y.W."/>
            <person name="Steen H."/>
            <person name="Mann M."/>
            <person name="Lamond A.I."/>
        </authorList>
    </citation>
    <scope>IDENTIFICATION BY MASS SPECTROMETRY</scope>
    <scope>SUBCELLULAR LOCATION</scope>
</reference>
<reference key="6">
    <citation type="journal article" date="2002" name="J. Biol. Chem.">
        <title>Determinants of the interaction of the spinal muscular atrophy disease protein SMN with the dimethylarginine-modified box H/ACA small nucleolar ribonucleoprotein GAR1.</title>
        <authorList>
            <person name="Whitehead S.E."/>
            <person name="Jones K.W."/>
            <person name="Zhang X."/>
            <person name="Cheng X."/>
            <person name="Terns R.M."/>
            <person name="Terns M.P."/>
        </authorList>
    </citation>
    <scope>INTERACTION WITH THE SMN COMPLEX</scope>
</reference>
<reference key="7">
    <citation type="journal article" date="2004" name="EMBO J.">
        <title>Architecture and assembly of mammalian H/ACA small nucleolar and telomerase ribonucleoproteins.</title>
        <authorList>
            <person name="Wang C."/>
            <person name="Meier U.T."/>
        </authorList>
    </citation>
    <scope>FUNCTION</scope>
    <scope>CHARACTERIZATION OF THE H/ACA SNORNP COMPLEX</scope>
</reference>
<reference key="8">
    <citation type="journal article" date="2009" name="Science">
        <title>A human telomerase holoenzyme protein required for Cajal body localization and telomere synthesis.</title>
        <authorList>
            <person name="Venteicher A.S."/>
            <person name="Abreu E.B."/>
            <person name="Meng Z."/>
            <person name="McCann K.E."/>
            <person name="Terns R.M."/>
            <person name="Veenstra T.D."/>
            <person name="Terns M.P."/>
            <person name="Artandi S.E."/>
        </authorList>
    </citation>
    <scope>IDENTIFICATION IN THE TELOMERASE HOLOENZYME COMPLEX</scope>
</reference>
<reference key="9">
    <citation type="journal article" date="2010" name="Mol. Cell. Biol.">
        <title>Specificity and stoichiometry of subunit interactions in the human telomerase holoenzyme assembled in vivo.</title>
        <authorList>
            <person name="Egan E.D."/>
            <person name="Collins K."/>
        </authorList>
    </citation>
    <scope>IDENTIFICATION IN THE TELOMERASE HOLOENZYME COMPLEX</scope>
</reference>
<reference key="10">
    <citation type="journal article" date="2011" name="BMC Syst. Biol.">
        <title>Initial characterization of the human central proteome.</title>
        <authorList>
            <person name="Burkard T.R."/>
            <person name="Planyavsky M."/>
            <person name="Kaupe I."/>
            <person name="Breitwieser F.P."/>
            <person name="Buerckstuemmer T."/>
            <person name="Bennett K.L."/>
            <person name="Superti-Furga G."/>
            <person name="Colinge J."/>
        </authorList>
    </citation>
    <scope>IDENTIFICATION BY MASS SPECTROMETRY [LARGE SCALE ANALYSIS]</scope>
</reference>
<reference key="11">
    <citation type="journal article" date="2017" name="Nat. Struct. Mol. Biol.">
        <title>Site-specific mapping of the human SUMO proteome reveals co-modification with phosphorylation.</title>
        <authorList>
            <person name="Hendriks I.A."/>
            <person name="Lyon D."/>
            <person name="Young C."/>
            <person name="Jensen L.J."/>
            <person name="Vertegaal A.C."/>
            <person name="Nielsen M.L."/>
        </authorList>
    </citation>
    <scope>SUMOYLATION [LARGE SCALE ANALYSIS] AT LYS-134</scope>
    <scope>IDENTIFICATION BY MASS SPECTROMETRY [LARGE SCALE ANALYSIS]</scope>
</reference>
<reference key="12">
    <citation type="journal article" date="2018" name="Nature">
        <title>Cryo-EM structure of substrate-bound human telomerase holoenzyme.</title>
        <authorList>
            <person name="Nguyen T.H.D."/>
            <person name="Tam J."/>
            <person name="Wu R.A."/>
            <person name="Greber B.J."/>
            <person name="Toso D."/>
            <person name="Nogales E."/>
            <person name="Collins K."/>
        </authorList>
    </citation>
    <scope>STRUCTURE BY ELECTRON MICROSCOPY (7.7 ANGSTROMS) OF THE TELOMERASE HOLOENZYME COMPLEX</scope>
</reference>
<keyword id="KW-0002">3D-structure</keyword>
<keyword id="KW-0025">Alternative splicing</keyword>
<keyword id="KW-1017">Isopeptide bond</keyword>
<keyword id="KW-0539">Nucleus</keyword>
<keyword id="KW-1267">Proteomics identification</keyword>
<keyword id="KW-1185">Reference proteome</keyword>
<keyword id="KW-0677">Repeat</keyword>
<keyword id="KW-0687">Ribonucleoprotein</keyword>
<keyword id="KW-0690">Ribosome biogenesis</keyword>
<keyword id="KW-0694">RNA-binding</keyword>
<keyword id="KW-0698">rRNA processing</keyword>
<keyword id="KW-0832">Ubl conjugation</keyword>
<accession>Q9NY12</accession>
<accession>Q5MJQ2</accession>
<sequence>MSFRGGGRGGFNRGGGGGGFNRGGSSNHFRGGGGGGGGGNFRGGGRGGFGRGGGRGGFNKGQDQGPPERVVLLGEFLHPCEDDIVCKCTTDENKVPYFNAPVYLENKEQIGKVDEIFGQLRDFYFSVKLSENMKASSFKKLQKFYIDPYKLLPLQRFLPRPPGEKGPPRGGGRGGRGGGRGGGGRGGGRGGGFRGGRGGGGGGFRGGRGGGFRGRGH</sequence>
<protein>
    <recommendedName>
        <fullName>H/ACA ribonucleoprotein complex subunit 1</fullName>
    </recommendedName>
    <alternativeName>
        <fullName>Nucleolar protein family A member 1</fullName>
    </alternativeName>
    <alternativeName>
        <fullName>snoRNP protein GAR1</fullName>
    </alternativeName>
</protein>
<name>GAR1_HUMAN</name>
<feature type="chain" id="PRO_0000208552" description="H/ACA ribonucleoprotein complex subunit 1">
    <location>
        <begin position="1"/>
        <end position="217"/>
    </location>
</feature>
<feature type="region of interest" description="Disordered" evidence="1">
    <location>
        <begin position="1"/>
        <end position="65"/>
    </location>
</feature>
<feature type="region of interest" description="RGG-box 1">
    <location>
        <begin position="4"/>
        <end position="57"/>
    </location>
</feature>
<feature type="region of interest" description="Disordered" evidence="1">
    <location>
        <begin position="156"/>
        <end position="217"/>
    </location>
</feature>
<feature type="region of interest" description="RGG-box 2">
    <location>
        <begin position="169"/>
        <end position="217"/>
    </location>
</feature>
<feature type="compositionally biased region" description="Gly residues" evidence="1">
    <location>
        <begin position="1"/>
        <end position="22"/>
    </location>
</feature>
<feature type="compositionally biased region" description="Gly residues" evidence="1">
    <location>
        <begin position="30"/>
        <end position="59"/>
    </location>
</feature>
<feature type="compositionally biased region" description="Gly residues" evidence="1">
    <location>
        <begin position="168"/>
        <end position="217"/>
    </location>
</feature>
<feature type="cross-link" description="Glycyl lysine isopeptide (Lys-Gly) (interchain with G-Cter in SUMO2)" evidence="11">
    <location>
        <position position="134"/>
    </location>
</feature>
<feature type="splice variant" id="VSP_014594" description="In isoform 2." evidence="9">
    <location>
        <begin position="181"/>
        <end position="198"/>
    </location>
</feature>
<feature type="sequence conflict" description="In Ref. 2; AAV98357." evidence="10" ref="2">
    <original>G</original>
    <variation>D</variation>
    <location>
        <position position="39"/>
    </location>
</feature>
<feature type="strand" evidence="12">
    <location>
        <begin position="71"/>
        <end position="79"/>
    </location>
</feature>
<feature type="strand" evidence="12">
    <location>
        <begin position="84"/>
        <end position="88"/>
    </location>
</feature>
<feature type="strand" evidence="12">
    <location>
        <begin position="101"/>
        <end position="103"/>
    </location>
</feature>
<feature type="strand" evidence="12">
    <location>
        <begin position="109"/>
        <end position="129"/>
    </location>
</feature>
<feature type="turn" evidence="12">
    <location>
        <begin position="135"/>
        <end position="137"/>
    </location>
</feature>
<feature type="strand" evidence="12">
    <location>
        <begin position="144"/>
        <end position="146"/>
    </location>
</feature>
<feature type="turn" evidence="12">
    <location>
        <begin position="148"/>
        <end position="150"/>
    </location>
</feature>
<feature type="helix" evidence="12">
    <location>
        <begin position="154"/>
        <end position="156"/>
    </location>
</feature>